<comment type="function">
    <text evidence="1">One of the primary rRNA binding proteins, this protein initially binds near the 5'-end of the 23S rRNA. It is important during the early stages of 50S assembly. It makes multiple contacts with different domains of the 23S rRNA in the assembled 50S subunit and ribosome.</text>
</comment>
<comment type="function">
    <text evidence="1">Forms part of the polypeptide exit tunnel.</text>
</comment>
<comment type="subunit">
    <text evidence="1">Part of the 50S ribosomal subunit.</text>
</comment>
<comment type="similarity">
    <text evidence="1">Belongs to the universal ribosomal protein uL4 family.</text>
</comment>
<organism>
    <name type="scientific">Tropheryma whipplei (strain Twist)</name>
    <name type="common">Whipple's bacillus</name>
    <dbReference type="NCBI Taxonomy" id="203267"/>
    <lineage>
        <taxon>Bacteria</taxon>
        <taxon>Bacillati</taxon>
        <taxon>Actinomycetota</taxon>
        <taxon>Actinomycetes</taxon>
        <taxon>Micrococcales</taxon>
        <taxon>Tropherymataceae</taxon>
        <taxon>Tropheryma</taxon>
    </lineage>
</organism>
<sequence length="248" mass="26366">MSPSATVFDIGGNAVGTLQLVGHLFDSDPNLHLIHQVVVAQQAAFRQGTHKTKSRAEVSGSGRKPFRQKGTGNARCGSTRAPQMRGGGVVHGPVPRNYVHRTPKKMIKAALAGCLTNRARAGRVHIVDSFGDTPSVADALTLFQITGLSSKLLVVAQASDSVAYRSVRNIPGVRLVHVGQLNSYDVLRSDDVLFTRGAYNVFVGPSGDLAFSEDRDNPGTSLPKSPTPEDSSDATKARSSRHDDRTGA</sequence>
<dbReference type="EMBL" id="AE014184">
    <property type="protein sequence ID" value="AAO44650.1"/>
    <property type="molecule type" value="Genomic_DNA"/>
</dbReference>
<dbReference type="RefSeq" id="WP_011102640.1">
    <property type="nucleotide sequence ID" value="NC_004572.3"/>
</dbReference>
<dbReference type="SMR" id="Q83FY7"/>
<dbReference type="STRING" id="203267.TWT_553"/>
<dbReference type="KEGG" id="twh:TWT_553"/>
<dbReference type="eggNOG" id="COG0088">
    <property type="taxonomic scope" value="Bacteria"/>
</dbReference>
<dbReference type="HOGENOM" id="CLU_041575_5_0_11"/>
<dbReference type="OrthoDB" id="9803201at2"/>
<dbReference type="Proteomes" id="UP000002200">
    <property type="component" value="Chromosome"/>
</dbReference>
<dbReference type="GO" id="GO:1990904">
    <property type="term" value="C:ribonucleoprotein complex"/>
    <property type="evidence" value="ECO:0007669"/>
    <property type="project" value="UniProtKB-KW"/>
</dbReference>
<dbReference type="GO" id="GO:0005840">
    <property type="term" value="C:ribosome"/>
    <property type="evidence" value="ECO:0007669"/>
    <property type="project" value="UniProtKB-KW"/>
</dbReference>
<dbReference type="GO" id="GO:0019843">
    <property type="term" value="F:rRNA binding"/>
    <property type="evidence" value="ECO:0007669"/>
    <property type="project" value="UniProtKB-UniRule"/>
</dbReference>
<dbReference type="GO" id="GO:0003735">
    <property type="term" value="F:structural constituent of ribosome"/>
    <property type="evidence" value="ECO:0007669"/>
    <property type="project" value="InterPro"/>
</dbReference>
<dbReference type="GO" id="GO:0006412">
    <property type="term" value="P:translation"/>
    <property type="evidence" value="ECO:0007669"/>
    <property type="project" value="UniProtKB-UniRule"/>
</dbReference>
<dbReference type="Gene3D" id="3.40.1370.10">
    <property type="match status" value="1"/>
</dbReference>
<dbReference type="HAMAP" id="MF_01328_B">
    <property type="entry name" value="Ribosomal_uL4_B"/>
    <property type="match status" value="1"/>
</dbReference>
<dbReference type="InterPro" id="IPR002136">
    <property type="entry name" value="Ribosomal_uL4"/>
</dbReference>
<dbReference type="InterPro" id="IPR013005">
    <property type="entry name" value="Ribosomal_uL4-like"/>
</dbReference>
<dbReference type="InterPro" id="IPR023574">
    <property type="entry name" value="Ribosomal_uL4_dom_sf"/>
</dbReference>
<dbReference type="NCBIfam" id="TIGR03953">
    <property type="entry name" value="rplD_bact"/>
    <property type="match status" value="1"/>
</dbReference>
<dbReference type="PANTHER" id="PTHR10746">
    <property type="entry name" value="50S RIBOSOMAL PROTEIN L4"/>
    <property type="match status" value="1"/>
</dbReference>
<dbReference type="PANTHER" id="PTHR10746:SF6">
    <property type="entry name" value="LARGE RIBOSOMAL SUBUNIT PROTEIN UL4M"/>
    <property type="match status" value="1"/>
</dbReference>
<dbReference type="Pfam" id="PF00573">
    <property type="entry name" value="Ribosomal_L4"/>
    <property type="match status" value="1"/>
</dbReference>
<dbReference type="SUPFAM" id="SSF52166">
    <property type="entry name" value="Ribosomal protein L4"/>
    <property type="match status" value="1"/>
</dbReference>
<accession>Q83FY7</accession>
<proteinExistence type="inferred from homology"/>
<keyword id="KW-1185">Reference proteome</keyword>
<keyword id="KW-0687">Ribonucleoprotein</keyword>
<keyword id="KW-0689">Ribosomal protein</keyword>
<keyword id="KW-0694">RNA-binding</keyword>
<keyword id="KW-0699">rRNA-binding</keyword>
<name>RL4_TROWT</name>
<reference key="1">
    <citation type="journal article" date="2003" name="Genome Res.">
        <title>Tropheryma whipplei twist: a human pathogenic Actinobacteria with a reduced genome.</title>
        <authorList>
            <person name="Raoult D."/>
            <person name="Ogata H."/>
            <person name="Audic S."/>
            <person name="Robert C."/>
            <person name="Suhre K."/>
            <person name="Drancourt M."/>
            <person name="Claverie J.-M."/>
        </authorList>
    </citation>
    <scope>NUCLEOTIDE SEQUENCE [LARGE SCALE GENOMIC DNA]</scope>
    <source>
        <strain>Twist</strain>
    </source>
</reference>
<protein>
    <recommendedName>
        <fullName evidence="1">Large ribosomal subunit protein uL4</fullName>
    </recommendedName>
    <alternativeName>
        <fullName evidence="3">50S ribosomal protein L4</fullName>
    </alternativeName>
</protein>
<gene>
    <name evidence="1" type="primary">rplD</name>
    <name type="ordered locus">TWT_553</name>
</gene>
<evidence type="ECO:0000255" key="1">
    <source>
        <dbReference type="HAMAP-Rule" id="MF_01328"/>
    </source>
</evidence>
<evidence type="ECO:0000256" key="2">
    <source>
        <dbReference type="SAM" id="MobiDB-lite"/>
    </source>
</evidence>
<evidence type="ECO:0000305" key="3"/>
<feature type="chain" id="PRO_0000129306" description="Large ribosomal subunit protein uL4">
    <location>
        <begin position="1"/>
        <end position="248"/>
    </location>
</feature>
<feature type="region of interest" description="Disordered" evidence="2">
    <location>
        <begin position="48"/>
        <end position="96"/>
    </location>
</feature>
<feature type="region of interest" description="Disordered" evidence="2">
    <location>
        <begin position="210"/>
        <end position="248"/>
    </location>
</feature>
<feature type="compositionally biased region" description="Basic and acidic residues" evidence="2">
    <location>
        <begin position="233"/>
        <end position="248"/>
    </location>
</feature>